<protein>
    <recommendedName>
        <fullName evidence="1">Inorganic pyrophosphatase</fullName>
        <ecNumber evidence="1">3.6.1.1</ecNumber>
    </recommendedName>
    <alternativeName>
        <fullName evidence="1">Pyrophosphate phospho-hydrolase</fullName>
        <shortName evidence="1">PPase</shortName>
    </alternativeName>
</protein>
<dbReference type="EC" id="3.6.1.1" evidence="1"/>
<dbReference type="EMBL" id="AL939116">
    <property type="protein sequence ID" value="CAB42762.1"/>
    <property type="molecule type" value="Genomic_DNA"/>
</dbReference>
<dbReference type="PIR" id="T36335">
    <property type="entry name" value="T36335"/>
</dbReference>
<dbReference type="RefSeq" id="NP_627615.1">
    <property type="nucleotide sequence ID" value="NC_003888.3"/>
</dbReference>
<dbReference type="RefSeq" id="WP_003975424.1">
    <property type="nucleotide sequence ID" value="NZ_VNID01000023.1"/>
</dbReference>
<dbReference type="SMR" id="Q9X8I9"/>
<dbReference type="FunCoup" id="Q9X8I9">
    <property type="interactions" value="265"/>
</dbReference>
<dbReference type="STRING" id="100226.gene:17761031"/>
<dbReference type="PaxDb" id="100226-SCO3409"/>
<dbReference type="KEGG" id="sco:SCO3409"/>
<dbReference type="PATRIC" id="fig|100226.15.peg.3472"/>
<dbReference type="eggNOG" id="COG0221">
    <property type="taxonomic scope" value="Bacteria"/>
</dbReference>
<dbReference type="HOGENOM" id="CLU_073198_1_1_11"/>
<dbReference type="InParanoid" id="Q9X8I9"/>
<dbReference type="OrthoDB" id="5187599at2"/>
<dbReference type="PhylomeDB" id="Q9X8I9"/>
<dbReference type="Proteomes" id="UP000001973">
    <property type="component" value="Chromosome"/>
</dbReference>
<dbReference type="GO" id="GO:0005829">
    <property type="term" value="C:cytosol"/>
    <property type="evidence" value="ECO:0000318"/>
    <property type="project" value="GO_Central"/>
</dbReference>
<dbReference type="GO" id="GO:0004427">
    <property type="term" value="F:inorganic diphosphate phosphatase activity"/>
    <property type="evidence" value="ECO:0000318"/>
    <property type="project" value="GO_Central"/>
</dbReference>
<dbReference type="GO" id="GO:0000287">
    <property type="term" value="F:magnesium ion binding"/>
    <property type="evidence" value="ECO:0000318"/>
    <property type="project" value="GO_Central"/>
</dbReference>
<dbReference type="GO" id="GO:0006796">
    <property type="term" value="P:phosphate-containing compound metabolic process"/>
    <property type="evidence" value="ECO:0000318"/>
    <property type="project" value="GO_Central"/>
</dbReference>
<dbReference type="CDD" id="cd00412">
    <property type="entry name" value="pyrophosphatase"/>
    <property type="match status" value="1"/>
</dbReference>
<dbReference type="FunFam" id="3.90.80.10:FF:000003">
    <property type="entry name" value="Inorganic pyrophosphatase"/>
    <property type="match status" value="1"/>
</dbReference>
<dbReference type="Gene3D" id="3.90.80.10">
    <property type="entry name" value="Inorganic pyrophosphatase"/>
    <property type="match status" value="1"/>
</dbReference>
<dbReference type="HAMAP" id="MF_00209">
    <property type="entry name" value="Inorganic_PPase"/>
    <property type="match status" value="1"/>
</dbReference>
<dbReference type="InterPro" id="IPR008162">
    <property type="entry name" value="Pyrophosphatase"/>
</dbReference>
<dbReference type="InterPro" id="IPR036649">
    <property type="entry name" value="Pyrophosphatase_sf"/>
</dbReference>
<dbReference type="PANTHER" id="PTHR10286">
    <property type="entry name" value="INORGANIC PYROPHOSPHATASE"/>
    <property type="match status" value="1"/>
</dbReference>
<dbReference type="Pfam" id="PF00719">
    <property type="entry name" value="Pyrophosphatase"/>
    <property type="match status" value="1"/>
</dbReference>
<dbReference type="SUPFAM" id="SSF50324">
    <property type="entry name" value="Inorganic pyrophosphatase"/>
    <property type="match status" value="1"/>
</dbReference>
<dbReference type="PROSITE" id="PS00387">
    <property type="entry name" value="PPASE"/>
    <property type="match status" value="1"/>
</dbReference>
<organism>
    <name type="scientific">Streptomyces coelicolor (strain ATCC BAA-471 / A3(2) / M145)</name>
    <dbReference type="NCBI Taxonomy" id="100226"/>
    <lineage>
        <taxon>Bacteria</taxon>
        <taxon>Bacillati</taxon>
        <taxon>Actinomycetota</taxon>
        <taxon>Actinomycetes</taxon>
        <taxon>Kitasatosporales</taxon>
        <taxon>Streptomycetaceae</taxon>
        <taxon>Streptomyces</taxon>
        <taxon>Streptomyces albidoflavus group</taxon>
    </lineage>
</organism>
<name>IPYR_STRCO</name>
<reference key="1">
    <citation type="journal article" date="2002" name="Nature">
        <title>Complete genome sequence of the model actinomycete Streptomyces coelicolor A3(2).</title>
        <authorList>
            <person name="Bentley S.D."/>
            <person name="Chater K.F."/>
            <person name="Cerdeno-Tarraga A.-M."/>
            <person name="Challis G.L."/>
            <person name="Thomson N.R."/>
            <person name="James K.D."/>
            <person name="Harris D.E."/>
            <person name="Quail M.A."/>
            <person name="Kieser H."/>
            <person name="Harper D."/>
            <person name="Bateman A."/>
            <person name="Brown S."/>
            <person name="Chandra G."/>
            <person name="Chen C.W."/>
            <person name="Collins M."/>
            <person name="Cronin A."/>
            <person name="Fraser A."/>
            <person name="Goble A."/>
            <person name="Hidalgo J."/>
            <person name="Hornsby T."/>
            <person name="Howarth S."/>
            <person name="Huang C.-H."/>
            <person name="Kieser T."/>
            <person name="Larke L."/>
            <person name="Murphy L.D."/>
            <person name="Oliver K."/>
            <person name="O'Neil S."/>
            <person name="Rabbinowitsch E."/>
            <person name="Rajandream M.A."/>
            <person name="Rutherford K.M."/>
            <person name="Rutter S."/>
            <person name="Seeger K."/>
            <person name="Saunders D."/>
            <person name="Sharp S."/>
            <person name="Squares R."/>
            <person name="Squares S."/>
            <person name="Taylor K."/>
            <person name="Warren T."/>
            <person name="Wietzorrek A."/>
            <person name="Woodward J.R."/>
            <person name="Barrell B.G."/>
            <person name="Parkhill J."/>
            <person name="Hopwood D.A."/>
        </authorList>
    </citation>
    <scope>NUCLEOTIDE SEQUENCE [LARGE SCALE GENOMIC DNA]</scope>
    <source>
        <strain>ATCC BAA-471 / A3(2) / M145</strain>
    </source>
</reference>
<evidence type="ECO:0000255" key="1">
    <source>
        <dbReference type="HAMAP-Rule" id="MF_00209"/>
    </source>
</evidence>
<keyword id="KW-0963">Cytoplasm</keyword>
<keyword id="KW-0378">Hydrolase</keyword>
<keyword id="KW-0460">Magnesium</keyword>
<keyword id="KW-0479">Metal-binding</keyword>
<keyword id="KW-1185">Reference proteome</keyword>
<feature type="chain" id="PRO_0000137532" description="Inorganic pyrophosphatase">
    <location>
        <begin position="1"/>
        <end position="163"/>
    </location>
</feature>
<feature type="active site" description="Proton acceptor" evidence="1">
    <location>
        <position position="89"/>
    </location>
</feature>
<feature type="binding site" evidence="1">
    <location>
        <position position="8"/>
    </location>
    <ligand>
        <name>Mg(2+)</name>
        <dbReference type="ChEBI" id="CHEBI:18420"/>
        <label>2</label>
    </ligand>
</feature>
<feature type="binding site" evidence="1">
    <location>
        <position position="16"/>
    </location>
    <ligand>
        <name>substrate</name>
    </ligand>
</feature>
<feature type="binding site" evidence="1">
    <location>
        <position position="30"/>
    </location>
    <ligand>
        <name>substrate</name>
    </ligand>
</feature>
<feature type="binding site" evidence="1">
    <location>
        <position position="42"/>
    </location>
    <ligand>
        <name>substrate</name>
    </ligand>
</feature>
<feature type="binding site" evidence="1">
    <location>
        <position position="52"/>
    </location>
    <ligand>
        <name>Mg(2+)</name>
        <dbReference type="ChEBI" id="CHEBI:18420"/>
        <label>1</label>
    </ligand>
</feature>
<feature type="binding site" evidence="1">
    <location>
        <position position="57"/>
    </location>
    <ligand>
        <name>Mg(2+)</name>
        <dbReference type="ChEBI" id="CHEBI:18420"/>
        <label>1</label>
    </ligand>
</feature>
<feature type="binding site" evidence="1">
    <location>
        <position position="57"/>
    </location>
    <ligand>
        <name>Mg(2+)</name>
        <dbReference type="ChEBI" id="CHEBI:18420"/>
        <label>2</label>
    </ligand>
</feature>
<feature type="binding site" evidence="1">
    <location>
        <position position="84"/>
    </location>
    <ligand>
        <name>Mg(2+)</name>
        <dbReference type="ChEBI" id="CHEBI:18420"/>
        <label>3</label>
    </ligand>
</feature>
<feature type="binding site" evidence="1">
    <location>
        <position position="89"/>
    </location>
    <ligand>
        <name>Mg(2+)</name>
        <dbReference type="ChEBI" id="CHEBI:18420"/>
        <label>1</label>
    </ligand>
</feature>
<feature type="binding site" evidence="1">
    <location>
        <position position="89"/>
    </location>
    <ligand>
        <name>Mg(2+)</name>
        <dbReference type="ChEBI" id="CHEBI:18420"/>
        <label>3</label>
    </ligand>
</feature>
<feature type="binding site" evidence="1">
    <location>
        <position position="126"/>
    </location>
    <ligand>
        <name>substrate</name>
    </ligand>
</feature>
<sequence>MEFDVTIEIPKGSRNKYEVDHETGRIRLDRRLFTSTAYPTDYGFVENTLGEDGDPLDALVILDEPTFPGCLIRCRAIGMFRMTDEAGGDDKLLCVPSTDPRVEHLRDIHHVSEFDRLEIQHFFEVYKDLEPGKSVEGADWVGRTEAEAEIERSYKRFKDQGGH</sequence>
<gene>
    <name evidence="1" type="primary">ppa</name>
    <name type="ordered locus">SCO3409</name>
    <name type="ORF">SCE9.16</name>
</gene>
<proteinExistence type="inferred from homology"/>
<accession>Q9X8I9</accession>
<comment type="function">
    <text evidence="1">Catalyzes the hydrolysis of inorganic pyrophosphate (PPi) forming two phosphate ions.</text>
</comment>
<comment type="catalytic activity">
    <reaction evidence="1">
        <text>diphosphate + H2O = 2 phosphate + H(+)</text>
        <dbReference type="Rhea" id="RHEA:24576"/>
        <dbReference type="ChEBI" id="CHEBI:15377"/>
        <dbReference type="ChEBI" id="CHEBI:15378"/>
        <dbReference type="ChEBI" id="CHEBI:33019"/>
        <dbReference type="ChEBI" id="CHEBI:43474"/>
        <dbReference type="EC" id="3.6.1.1"/>
    </reaction>
</comment>
<comment type="cofactor">
    <cofactor evidence="1">
        <name>Mg(2+)</name>
        <dbReference type="ChEBI" id="CHEBI:18420"/>
    </cofactor>
</comment>
<comment type="subunit">
    <text evidence="1">Homohexamer.</text>
</comment>
<comment type="subcellular location">
    <subcellularLocation>
        <location evidence="1">Cytoplasm</location>
    </subcellularLocation>
</comment>
<comment type="similarity">
    <text evidence="1">Belongs to the PPase family.</text>
</comment>